<gene>
    <name type="ordered locus">NMA0882</name>
</gene>
<evidence type="ECO:0000250" key="1">
    <source>
        <dbReference type="UniProtKB" id="P0A890"/>
    </source>
</evidence>
<evidence type="ECO:0000305" key="2"/>
<dbReference type="EMBL" id="AL157959">
    <property type="protein sequence ID" value="CAM08117.1"/>
    <property type="molecule type" value="Genomic_DNA"/>
</dbReference>
<dbReference type="RefSeq" id="WP_002222784.1">
    <property type="nucleotide sequence ID" value="NC_003116.1"/>
</dbReference>
<dbReference type="SMR" id="P67102"/>
<dbReference type="EnsemblBacteria" id="CAM08117">
    <property type="protein sequence ID" value="CAM08117"/>
    <property type="gene ID" value="NMA0882"/>
</dbReference>
<dbReference type="KEGG" id="nma:NMA0882"/>
<dbReference type="HOGENOM" id="CLU_165255_1_1_4"/>
<dbReference type="Proteomes" id="UP000000626">
    <property type="component" value="Chromosome"/>
</dbReference>
<dbReference type="CDD" id="cd00291">
    <property type="entry name" value="SirA_YedF_YeeD"/>
    <property type="match status" value="1"/>
</dbReference>
<dbReference type="Gene3D" id="3.30.110.40">
    <property type="entry name" value="TusA-like domain"/>
    <property type="match status" value="1"/>
</dbReference>
<dbReference type="InterPro" id="IPR001455">
    <property type="entry name" value="TusA-like"/>
</dbReference>
<dbReference type="InterPro" id="IPR036868">
    <property type="entry name" value="TusA-like_sf"/>
</dbReference>
<dbReference type="PANTHER" id="PTHR33279">
    <property type="entry name" value="SULFUR CARRIER PROTEIN YEDF-RELATED"/>
    <property type="match status" value="1"/>
</dbReference>
<dbReference type="PANTHER" id="PTHR33279:SF6">
    <property type="entry name" value="SULFUR CARRIER PROTEIN YEDF-RELATED"/>
    <property type="match status" value="1"/>
</dbReference>
<dbReference type="Pfam" id="PF01206">
    <property type="entry name" value="TusA"/>
    <property type="match status" value="1"/>
</dbReference>
<dbReference type="SUPFAM" id="SSF64307">
    <property type="entry name" value="SirA-like"/>
    <property type="match status" value="1"/>
</dbReference>
<dbReference type="PROSITE" id="PS01148">
    <property type="entry name" value="UPF0033"/>
    <property type="match status" value="1"/>
</dbReference>
<protein>
    <recommendedName>
        <fullName>Putative sulfur carrier protein NMA0882</fullName>
    </recommendedName>
</protein>
<organism>
    <name type="scientific">Neisseria meningitidis serogroup A / serotype 4A (strain DSM 15465 / Z2491)</name>
    <dbReference type="NCBI Taxonomy" id="122587"/>
    <lineage>
        <taxon>Bacteria</taxon>
        <taxon>Pseudomonadati</taxon>
        <taxon>Pseudomonadota</taxon>
        <taxon>Betaproteobacteria</taxon>
        <taxon>Neisseriales</taxon>
        <taxon>Neisseriaceae</taxon>
        <taxon>Neisseria</taxon>
    </lineage>
</organism>
<name>Y882_NEIMA</name>
<comment type="similarity">
    <text evidence="2">Belongs to the sulfur carrier protein TusA family.</text>
</comment>
<sequence>MNSETLDVTGLKCPLPILRAKKALAQMQQGDVLTVLATDGGAPGDFEAFCRQTGHVLLDASEQDGVFTLVVQHK</sequence>
<proteinExistence type="inferred from homology"/>
<reference key="1">
    <citation type="journal article" date="2000" name="Nature">
        <title>Complete DNA sequence of a serogroup A strain of Neisseria meningitidis Z2491.</title>
        <authorList>
            <person name="Parkhill J."/>
            <person name="Achtman M."/>
            <person name="James K.D."/>
            <person name="Bentley S.D."/>
            <person name="Churcher C.M."/>
            <person name="Klee S.R."/>
            <person name="Morelli G."/>
            <person name="Basham D."/>
            <person name="Brown D."/>
            <person name="Chillingworth T."/>
            <person name="Davies R.M."/>
            <person name="Davis P."/>
            <person name="Devlin K."/>
            <person name="Feltwell T."/>
            <person name="Hamlin N."/>
            <person name="Holroyd S."/>
            <person name="Jagels K."/>
            <person name="Leather S."/>
            <person name="Moule S."/>
            <person name="Mungall K.L."/>
            <person name="Quail M.A."/>
            <person name="Rajandream M.A."/>
            <person name="Rutherford K.M."/>
            <person name="Simmonds M."/>
            <person name="Skelton J."/>
            <person name="Whitehead S."/>
            <person name="Spratt B.G."/>
            <person name="Barrell B.G."/>
        </authorList>
    </citation>
    <scope>NUCLEOTIDE SEQUENCE [LARGE SCALE GENOMIC DNA]</scope>
    <source>
        <strain>DSM 15465 / Z2491</strain>
    </source>
</reference>
<accession>P67102</accession>
<accession>A1IQT3</accession>
<accession>Q9JR98</accession>
<feature type="chain" id="PRO_0000159073" description="Putative sulfur carrier protein NMA0882">
    <location>
        <begin position="1"/>
        <end position="74"/>
    </location>
</feature>
<feature type="active site" description="Cysteine persulfide intermediate" evidence="1">
    <location>
        <position position="13"/>
    </location>
</feature>